<accession>Q6NRD5</accession>
<dbReference type="EMBL" id="BC070821">
    <property type="protein sequence ID" value="AAH70821.1"/>
    <property type="molecule type" value="mRNA"/>
</dbReference>
<dbReference type="RefSeq" id="NP_001084849.2">
    <property type="nucleotide sequence ID" value="NM_001091380.1"/>
</dbReference>
<dbReference type="SMR" id="Q6NRD5"/>
<dbReference type="BioGRID" id="101261">
    <property type="interactions" value="1"/>
</dbReference>
<dbReference type="IntAct" id="Q6NRD5">
    <property type="interactions" value="1"/>
</dbReference>
<dbReference type="DNASU" id="431895"/>
<dbReference type="GeneID" id="431895"/>
<dbReference type="KEGG" id="xla:431895"/>
<dbReference type="AGR" id="Xenbase:XB-GENE-993344"/>
<dbReference type="CTD" id="431895"/>
<dbReference type="Xenbase" id="XB-GENE-993344">
    <property type="gene designation" value="exd1.L"/>
</dbReference>
<dbReference type="OrthoDB" id="26838at2759"/>
<dbReference type="Proteomes" id="UP000186698">
    <property type="component" value="Chromosome 8L"/>
</dbReference>
<dbReference type="Bgee" id="431895">
    <property type="expression patterns" value="Expressed in testis and 9 other cell types or tissues"/>
</dbReference>
<dbReference type="GO" id="GO:0043186">
    <property type="term" value="C:P granule"/>
    <property type="evidence" value="ECO:0000250"/>
    <property type="project" value="UniProtKB"/>
</dbReference>
<dbReference type="GO" id="GO:1990923">
    <property type="term" value="C:PET complex"/>
    <property type="evidence" value="ECO:0000250"/>
    <property type="project" value="UniProtKB"/>
</dbReference>
<dbReference type="GO" id="GO:0042803">
    <property type="term" value="F:protein homodimerization activity"/>
    <property type="evidence" value="ECO:0000250"/>
    <property type="project" value="UniProtKB"/>
</dbReference>
<dbReference type="GO" id="GO:0003723">
    <property type="term" value="F:RNA binding"/>
    <property type="evidence" value="ECO:0000250"/>
    <property type="project" value="UniProtKB"/>
</dbReference>
<dbReference type="GO" id="GO:0051321">
    <property type="term" value="P:meiotic cell cycle"/>
    <property type="evidence" value="ECO:0007669"/>
    <property type="project" value="UniProtKB-KW"/>
</dbReference>
<dbReference type="GO" id="GO:0034587">
    <property type="term" value="P:piRNA processing"/>
    <property type="evidence" value="ECO:0000250"/>
    <property type="project" value="UniProtKB"/>
</dbReference>
<dbReference type="GO" id="GO:0031047">
    <property type="term" value="P:regulatory ncRNA-mediated gene silencing"/>
    <property type="evidence" value="ECO:0000250"/>
    <property type="project" value="UniProtKB"/>
</dbReference>
<dbReference type="CDD" id="cd06148">
    <property type="entry name" value="Egl_like_exo"/>
    <property type="match status" value="1"/>
</dbReference>
<dbReference type="FunFam" id="3.30.420.10:FF:000103">
    <property type="entry name" value="piRNA biogenesis protein EXD1"/>
    <property type="match status" value="1"/>
</dbReference>
<dbReference type="Gene3D" id="3.30.420.10">
    <property type="entry name" value="Ribonuclease H-like superfamily/Ribonuclease H"/>
    <property type="match status" value="1"/>
</dbReference>
<dbReference type="InterPro" id="IPR002562">
    <property type="entry name" value="3'-5'_exonuclease_dom"/>
</dbReference>
<dbReference type="InterPro" id="IPR052144">
    <property type="entry name" value="piRNA_biogenesis_EXD1"/>
</dbReference>
<dbReference type="InterPro" id="IPR012337">
    <property type="entry name" value="RNaseH-like_sf"/>
</dbReference>
<dbReference type="InterPro" id="IPR036397">
    <property type="entry name" value="RNaseH_sf"/>
</dbReference>
<dbReference type="PANTHER" id="PTHR46628">
    <property type="entry name" value="PIRNA BIOGENESIS PROTEIN EXD1"/>
    <property type="match status" value="1"/>
</dbReference>
<dbReference type="PANTHER" id="PTHR46628:SF1">
    <property type="entry name" value="PIRNA BIOGENESIS PROTEIN EXD1"/>
    <property type="match status" value="1"/>
</dbReference>
<dbReference type="Pfam" id="PF01612">
    <property type="entry name" value="DNA_pol_A_exo1"/>
    <property type="match status" value="1"/>
</dbReference>
<dbReference type="SUPFAM" id="SSF53098">
    <property type="entry name" value="Ribonuclease H-like"/>
    <property type="match status" value="1"/>
</dbReference>
<sequence length="444" mass="50781">MLINKVKDLETGKIIPGAQLLFGYNILNVALQKDVEEVPAKHLDKLTIEDREQTSTEQRHADECNQDAERTHRDIDKSQDLRTRTLKVIKHSVDEEEVGYTIIDQFQPIFGPAIRHLQNQKVISIGAVGQNICRHGKLSWLQFATRSRVYLFDVLVLGSKVFKNGLQMVLEDKGILKVIHDCRWLGDILSHQYGIILNNVFDTQVGDVYLFSMETGGFLPHGTRTLEECLIHHLSMLPSKVSFLAHRQTLTKEYHDIWFDRPMDPTLLKLLSLEVTYLMPLRSAMLDAMFSDFTLLVDGYLNAYRRGTADILESPELSVAELPKELQQLRVLQQMRREKALKEYDVNNKGLLTRVEAEKAPRSEASGTKHDAELENVVKLTKSEKSFHQTMTTNAPLLENQTEKQQGALCQKFPVVPNCFPRGPFDYYLYKKWASNDTPTTNVS</sequence>
<evidence type="ECO:0000250" key="1">
    <source>
        <dbReference type="UniProtKB" id="H9IUR0"/>
    </source>
</evidence>
<evidence type="ECO:0000250" key="2">
    <source>
        <dbReference type="UniProtKB" id="Q8CDF7"/>
    </source>
</evidence>
<evidence type="ECO:0000250" key="3">
    <source>
        <dbReference type="UniProtKB" id="Q8NHP7"/>
    </source>
</evidence>
<evidence type="ECO:0000255" key="4"/>
<evidence type="ECO:0000256" key="5">
    <source>
        <dbReference type="SAM" id="MobiDB-lite"/>
    </source>
</evidence>
<evidence type="ECO:0000305" key="6"/>
<reference key="1">
    <citation type="submission" date="2004-05" db="EMBL/GenBank/DDBJ databases">
        <authorList>
            <consortium name="NIH - Xenopus Gene Collection (XGC) project"/>
        </authorList>
    </citation>
    <scope>NUCLEOTIDE SEQUENCE [LARGE SCALE MRNA]</scope>
    <source>
        <tissue>Oocyte</tissue>
    </source>
</reference>
<organism>
    <name type="scientific">Xenopus laevis</name>
    <name type="common">African clawed frog</name>
    <dbReference type="NCBI Taxonomy" id="8355"/>
    <lineage>
        <taxon>Eukaryota</taxon>
        <taxon>Metazoa</taxon>
        <taxon>Chordata</taxon>
        <taxon>Craniata</taxon>
        <taxon>Vertebrata</taxon>
        <taxon>Euteleostomi</taxon>
        <taxon>Amphibia</taxon>
        <taxon>Batrachia</taxon>
        <taxon>Anura</taxon>
        <taxon>Pipoidea</taxon>
        <taxon>Pipidae</taxon>
        <taxon>Xenopodinae</taxon>
        <taxon>Xenopus</taxon>
        <taxon>Xenopus</taxon>
    </lineage>
</organism>
<protein>
    <recommendedName>
        <fullName evidence="6">piRNA biogenesis protein EXD1</fullName>
    </recommendedName>
    <alternativeName>
        <fullName evidence="3">Exonuclease 3'-5' domain-containing protein 1</fullName>
    </alternativeName>
    <alternativeName>
        <fullName evidence="3">Exonuclease 3'-5' domain-like-containing protein 1</fullName>
    </alternativeName>
    <alternativeName>
        <fullName evidence="6">Inactive exonuclease EXD1</fullName>
    </alternativeName>
</protein>
<keyword id="KW-0963">Cytoplasm</keyword>
<keyword id="KW-0469">Meiosis</keyword>
<keyword id="KW-1185">Reference proteome</keyword>
<keyword id="KW-0694">RNA-binding</keyword>
<keyword id="KW-0943">RNA-mediated gene silencing</keyword>
<name>EXD1_XENLA</name>
<proteinExistence type="evidence at transcript level"/>
<gene>
    <name type="primary">exd1</name>
    <name type="synonym">exdl1</name>
</gene>
<comment type="function">
    <text evidence="1 2">RNA-binding component of the PET complex, a multiprotein complex required for the processing of piRNAs during spermatogenesis. The piRNA metabolic process mediates the repression of transposable elements during meiosis by forming complexes composed of piRNAs and Piwi proteins and governs the methylation and subsequent repression of transposable elements, preventing their mobilization, which is essential for the germline integrity. The PET complex is required during the secondary piRNAs metabolic process for the piwil2 slicing-triggered loading of piwil4 piRNAs. In the PET complex, exd1 probably acts as an RNA adapter. Exd1 is an inactive exonuclease.</text>
</comment>
<comment type="subunit">
    <text evidence="1 2">Homodimer (By similarity). Component of the PET complex (By similarity).</text>
</comment>
<comment type="subcellular location">
    <subcellularLocation>
        <location evidence="1">Cytoplasm</location>
    </subcellularLocation>
    <text evidence="1">Component of the meiotic nuage, also named P granule, a germ-cell-specific organelle required to repress transposon activity during meiosis.</text>
</comment>
<comment type="domain">
    <text evidence="2">The 3'-5' exonuclease domain lacks the conserved Asp-Glu-Asp-Asp (DEDD) residues that coordinates divalent ions essential for exonuclease activity.</text>
</comment>
<comment type="similarity">
    <text evidence="6">Belongs to the EXD1 family.</text>
</comment>
<feature type="chain" id="PRO_0000337247" description="piRNA biogenesis protein EXD1">
    <location>
        <begin position="1"/>
        <end position="444"/>
    </location>
</feature>
<feature type="domain" description="3'-5' exonuclease" evidence="4">
    <location>
        <begin position="142"/>
        <end position="205"/>
    </location>
</feature>
<feature type="region of interest" description="Disordered" evidence="5">
    <location>
        <begin position="49"/>
        <end position="76"/>
    </location>
</feature>